<feature type="chain" id="PRO_0000178485" description="Large ribosomal subunit protein bL28">
    <location>
        <begin position="1"/>
        <end position="61"/>
    </location>
</feature>
<feature type="region of interest" description="Disordered" evidence="2">
    <location>
        <begin position="1"/>
        <end position="24"/>
    </location>
</feature>
<feature type="compositionally biased region" description="Polar residues" evidence="2">
    <location>
        <begin position="9"/>
        <end position="23"/>
    </location>
</feature>
<proteinExistence type="inferred from homology"/>
<reference key="1">
    <citation type="journal article" date="2005" name="Proc. Natl. Acad. Sci. U.S.A.">
        <title>Complete genome sequence of the probiotic lactic acid bacterium Lactobacillus acidophilus NCFM.</title>
        <authorList>
            <person name="Altermann E."/>
            <person name="Russell W.M."/>
            <person name="Azcarate-Peril M.A."/>
            <person name="Barrangou R."/>
            <person name="Buck B.L."/>
            <person name="McAuliffe O."/>
            <person name="Souther N."/>
            <person name="Dobson A."/>
            <person name="Duong T."/>
            <person name="Callanan M."/>
            <person name="Lick S."/>
            <person name="Hamrick A."/>
            <person name="Cano R."/>
            <person name="Klaenhammer T.R."/>
        </authorList>
    </citation>
    <scope>NUCLEOTIDE SEQUENCE [LARGE SCALE GENOMIC DNA]</scope>
    <source>
        <strain>ATCC 700396 / NCK56 / N2 / NCFM</strain>
    </source>
</reference>
<dbReference type="EMBL" id="CP000033">
    <property type="protein sequence ID" value="AAV43141.1"/>
    <property type="molecule type" value="Genomic_DNA"/>
</dbReference>
<dbReference type="RefSeq" id="WP_003547911.1">
    <property type="nucleotide sequence ID" value="NC_006814.3"/>
</dbReference>
<dbReference type="RefSeq" id="YP_194172.1">
    <property type="nucleotide sequence ID" value="NC_006814.3"/>
</dbReference>
<dbReference type="SMR" id="Q5FJI3"/>
<dbReference type="STRING" id="272621.LBA1312"/>
<dbReference type="GeneID" id="93289603"/>
<dbReference type="KEGG" id="lac:LBA1312"/>
<dbReference type="PATRIC" id="fig|272621.13.peg.1242"/>
<dbReference type="eggNOG" id="COG0227">
    <property type="taxonomic scope" value="Bacteria"/>
</dbReference>
<dbReference type="HOGENOM" id="CLU_064548_7_1_9"/>
<dbReference type="OrthoDB" id="9805609at2"/>
<dbReference type="BioCyc" id="LACI272621:G1G49-1291-MONOMER"/>
<dbReference type="Proteomes" id="UP000006381">
    <property type="component" value="Chromosome"/>
</dbReference>
<dbReference type="GO" id="GO:1990904">
    <property type="term" value="C:ribonucleoprotein complex"/>
    <property type="evidence" value="ECO:0007669"/>
    <property type="project" value="UniProtKB-KW"/>
</dbReference>
<dbReference type="GO" id="GO:0005840">
    <property type="term" value="C:ribosome"/>
    <property type="evidence" value="ECO:0007669"/>
    <property type="project" value="UniProtKB-KW"/>
</dbReference>
<dbReference type="GO" id="GO:0003735">
    <property type="term" value="F:structural constituent of ribosome"/>
    <property type="evidence" value="ECO:0007669"/>
    <property type="project" value="InterPro"/>
</dbReference>
<dbReference type="GO" id="GO:0006412">
    <property type="term" value="P:translation"/>
    <property type="evidence" value="ECO:0007669"/>
    <property type="project" value="UniProtKB-UniRule"/>
</dbReference>
<dbReference type="Gene3D" id="2.30.170.40">
    <property type="entry name" value="Ribosomal protein L28/L24"/>
    <property type="match status" value="1"/>
</dbReference>
<dbReference type="HAMAP" id="MF_00373">
    <property type="entry name" value="Ribosomal_bL28"/>
    <property type="match status" value="1"/>
</dbReference>
<dbReference type="InterPro" id="IPR050096">
    <property type="entry name" value="Bacterial_rp_bL28"/>
</dbReference>
<dbReference type="InterPro" id="IPR026569">
    <property type="entry name" value="Ribosomal_bL28"/>
</dbReference>
<dbReference type="InterPro" id="IPR034704">
    <property type="entry name" value="Ribosomal_bL28/bL31-like_sf"/>
</dbReference>
<dbReference type="InterPro" id="IPR001383">
    <property type="entry name" value="Ribosomal_bL28_bact-type"/>
</dbReference>
<dbReference type="InterPro" id="IPR037147">
    <property type="entry name" value="Ribosomal_bL28_sf"/>
</dbReference>
<dbReference type="NCBIfam" id="TIGR00009">
    <property type="entry name" value="L28"/>
    <property type="match status" value="1"/>
</dbReference>
<dbReference type="PANTHER" id="PTHR39080">
    <property type="entry name" value="50S RIBOSOMAL PROTEIN L28"/>
    <property type="match status" value="1"/>
</dbReference>
<dbReference type="PANTHER" id="PTHR39080:SF1">
    <property type="entry name" value="LARGE RIBOSOMAL SUBUNIT PROTEIN BL28A"/>
    <property type="match status" value="1"/>
</dbReference>
<dbReference type="Pfam" id="PF00830">
    <property type="entry name" value="Ribosomal_L28"/>
    <property type="match status" value="1"/>
</dbReference>
<dbReference type="SUPFAM" id="SSF143800">
    <property type="entry name" value="L28p-like"/>
    <property type="match status" value="1"/>
</dbReference>
<evidence type="ECO:0000255" key="1">
    <source>
        <dbReference type="HAMAP-Rule" id="MF_00373"/>
    </source>
</evidence>
<evidence type="ECO:0000256" key="2">
    <source>
        <dbReference type="SAM" id="MobiDB-lite"/>
    </source>
</evidence>
<evidence type="ECO:0000305" key="3"/>
<gene>
    <name evidence="1" type="primary">rpmB</name>
    <name type="ordered locus">LBA1312</name>
</gene>
<comment type="similarity">
    <text evidence="1">Belongs to the bacterial ribosomal protein bL28 family.</text>
</comment>
<protein>
    <recommendedName>
        <fullName evidence="1">Large ribosomal subunit protein bL28</fullName>
    </recommendedName>
    <alternativeName>
        <fullName evidence="3">50S ribosomal protein L28</fullName>
    </alternativeName>
</protein>
<sequence length="61" mass="6964">MAKDYVTGKKTTFGNKRSHSLNPTRRAWKPNLQKVRILVDGKPKRVWVSTKALKSGKVTRV</sequence>
<keyword id="KW-1185">Reference proteome</keyword>
<keyword id="KW-0687">Ribonucleoprotein</keyword>
<keyword id="KW-0689">Ribosomal protein</keyword>
<name>RL28_LACAC</name>
<organism>
    <name type="scientific">Lactobacillus acidophilus (strain ATCC 700396 / NCK56 / N2 / NCFM)</name>
    <dbReference type="NCBI Taxonomy" id="272621"/>
    <lineage>
        <taxon>Bacteria</taxon>
        <taxon>Bacillati</taxon>
        <taxon>Bacillota</taxon>
        <taxon>Bacilli</taxon>
        <taxon>Lactobacillales</taxon>
        <taxon>Lactobacillaceae</taxon>
        <taxon>Lactobacillus</taxon>
    </lineage>
</organism>
<accession>Q5FJI3</accession>